<name>LIPB_BURVG</name>
<evidence type="ECO:0000255" key="1">
    <source>
        <dbReference type="HAMAP-Rule" id="MF_00013"/>
    </source>
</evidence>
<evidence type="ECO:0000255" key="2">
    <source>
        <dbReference type="PROSITE-ProRule" id="PRU01067"/>
    </source>
</evidence>
<reference key="1">
    <citation type="submission" date="2007-03" db="EMBL/GenBank/DDBJ databases">
        <title>Complete sequence of chromosome 1 of Burkholderia vietnamiensis G4.</title>
        <authorList>
            <consortium name="US DOE Joint Genome Institute"/>
            <person name="Copeland A."/>
            <person name="Lucas S."/>
            <person name="Lapidus A."/>
            <person name="Barry K."/>
            <person name="Detter J.C."/>
            <person name="Glavina del Rio T."/>
            <person name="Hammon N."/>
            <person name="Israni S."/>
            <person name="Dalin E."/>
            <person name="Tice H."/>
            <person name="Pitluck S."/>
            <person name="Chain P."/>
            <person name="Malfatti S."/>
            <person name="Shin M."/>
            <person name="Vergez L."/>
            <person name="Schmutz J."/>
            <person name="Larimer F."/>
            <person name="Land M."/>
            <person name="Hauser L."/>
            <person name="Kyrpides N."/>
            <person name="Tiedje J."/>
            <person name="Richardson P."/>
        </authorList>
    </citation>
    <scope>NUCLEOTIDE SEQUENCE [LARGE SCALE GENOMIC DNA]</scope>
    <source>
        <strain>G4 / LMG 22486</strain>
    </source>
</reference>
<dbReference type="EC" id="2.3.1.181" evidence="1"/>
<dbReference type="EMBL" id="CP000614">
    <property type="protein sequence ID" value="ABO55975.1"/>
    <property type="molecule type" value="Genomic_DNA"/>
</dbReference>
<dbReference type="SMR" id="A4JI72"/>
<dbReference type="KEGG" id="bvi:Bcep1808_2984"/>
<dbReference type="eggNOG" id="COG0321">
    <property type="taxonomic scope" value="Bacteria"/>
</dbReference>
<dbReference type="HOGENOM" id="CLU_035168_3_1_4"/>
<dbReference type="UniPathway" id="UPA00538">
    <property type="reaction ID" value="UER00592"/>
</dbReference>
<dbReference type="Proteomes" id="UP000002287">
    <property type="component" value="Chromosome 1"/>
</dbReference>
<dbReference type="GO" id="GO:0005737">
    <property type="term" value="C:cytoplasm"/>
    <property type="evidence" value="ECO:0007669"/>
    <property type="project" value="UniProtKB-SubCell"/>
</dbReference>
<dbReference type="GO" id="GO:0033819">
    <property type="term" value="F:lipoyl(octanoyl) transferase activity"/>
    <property type="evidence" value="ECO:0007669"/>
    <property type="project" value="UniProtKB-EC"/>
</dbReference>
<dbReference type="GO" id="GO:0036211">
    <property type="term" value="P:protein modification process"/>
    <property type="evidence" value="ECO:0007669"/>
    <property type="project" value="InterPro"/>
</dbReference>
<dbReference type="CDD" id="cd16444">
    <property type="entry name" value="LipB"/>
    <property type="match status" value="1"/>
</dbReference>
<dbReference type="FunFam" id="3.30.930.10:FF:000020">
    <property type="entry name" value="Octanoyltransferase"/>
    <property type="match status" value="1"/>
</dbReference>
<dbReference type="Gene3D" id="3.30.930.10">
    <property type="entry name" value="Bira Bifunctional Protein, Domain 2"/>
    <property type="match status" value="1"/>
</dbReference>
<dbReference type="HAMAP" id="MF_00013">
    <property type="entry name" value="LipB"/>
    <property type="match status" value="1"/>
</dbReference>
<dbReference type="InterPro" id="IPR045864">
    <property type="entry name" value="aa-tRNA-synth_II/BPL/LPL"/>
</dbReference>
<dbReference type="InterPro" id="IPR004143">
    <property type="entry name" value="BPL_LPL_catalytic"/>
</dbReference>
<dbReference type="InterPro" id="IPR000544">
    <property type="entry name" value="Octanoyltransferase"/>
</dbReference>
<dbReference type="InterPro" id="IPR020605">
    <property type="entry name" value="Octanoyltransferase_CS"/>
</dbReference>
<dbReference type="NCBIfam" id="TIGR00214">
    <property type="entry name" value="lipB"/>
    <property type="match status" value="1"/>
</dbReference>
<dbReference type="NCBIfam" id="NF010922">
    <property type="entry name" value="PRK14342.1"/>
    <property type="match status" value="1"/>
</dbReference>
<dbReference type="NCBIfam" id="NF010923">
    <property type="entry name" value="PRK14343.1"/>
    <property type="match status" value="1"/>
</dbReference>
<dbReference type="PANTHER" id="PTHR10993:SF7">
    <property type="entry name" value="LIPOYLTRANSFERASE 2, MITOCHONDRIAL-RELATED"/>
    <property type="match status" value="1"/>
</dbReference>
<dbReference type="PANTHER" id="PTHR10993">
    <property type="entry name" value="OCTANOYLTRANSFERASE"/>
    <property type="match status" value="1"/>
</dbReference>
<dbReference type="Pfam" id="PF21948">
    <property type="entry name" value="LplA-B_cat"/>
    <property type="match status" value="1"/>
</dbReference>
<dbReference type="PIRSF" id="PIRSF016262">
    <property type="entry name" value="LPLase"/>
    <property type="match status" value="1"/>
</dbReference>
<dbReference type="SUPFAM" id="SSF55681">
    <property type="entry name" value="Class II aaRS and biotin synthetases"/>
    <property type="match status" value="1"/>
</dbReference>
<dbReference type="PROSITE" id="PS51733">
    <property type="entry name" value="BPL_LPL_CATALYTIC"/>
    <property type="match status" value="1"/>
</dbReference>
<dbReference type="PROSITE" id="PS01313">
    <property type="entry name" value="LIPB"/>
    <property type="match status" value="1"/>
</dbReference>
<proteinExistence type="inferred from homology"/>
<comment type="function">
    <text evidence="1">Catalyzes the transfer of endogenously produced octanoic acid from octanoyl-acyl-carrier-protein onto the lipoyl domains of lipoate-dependent enzymes. Lipoyl-ACP can also act as a substrate although octanoyl-ACP is likely to be the physiological substrate.</text>
</comment>
<comment type="catalytic activity">
    <reaction evidence="1">
        <text>octanoyl-[ACP] + L-lysyl-[protein] = N(6)-octanoyl-L-lysyl-[protein] + holo-[ACP] + H(+)</text>
        <dbReference type="Rhea" id="RHEA:17665"/>
        <dbReference type="Rhea" id="RHEA-COMP:9636"/>
        <dbReference type="Rhea" id="RHEA-COMP:9685"/>
        <dbReference type="Rhea" id="RHEA-COMP:9752"/>
        <dbReference type="Rhea" id="RHEA-COMP:9928"/>
        <dbReference type="ChEBI" id="CHEBI:15378"/>
        <dbReference type="ChEBI" id="CHEBI:29969"/>
        <dbReference type="ChEBI" id="CHEBI:64479"/>
        <dbReference type="ChEBI" id="CHEBI:78463"/>
        <dbReference type="ChEBI" id="CHEBI:78809"/>
        <dbReference type="EC" id="2.3.1.181"/>
    </reaction>
</comment>
<comment type="pathway">
    <text evidence="1">Protein modification; protein lipoylation via endogenous pathway; protein N(6)-(lipoyl)lysine from octanoyl-[acyl-carrier-protein]: step 1/2.</text>
</comment>
<comment type="subcellular location">
    <subcellularLocation>
        <location evidence="1">Cytoplasm</location>
    </subcellularLocation>
</comment>
<comment type="miscellaneous">
    <text evidence="1">In the reaction, the free carboxyl group of octanoic acid is attached via an amide linkage to the epsilon-amino group of a specific lysine residue of lipoyl domains of lipoate-dependent enzymes.</text>
</comment>
<comment type="similarity">
    <text evidence="1">Belongs to the LipB family.</text>
</comment>
<feature type="chain" id="PRO_1000089448" description="Octanoyltransferase">
    <location>
        <begin position="1"/>
        <end position="251"/>
    </location>
</feature>
<feature type="domain" description="BPL/LPL catalytic" evidence="2">
    <location>
        <begin position="56"/>
        <end position="241"/>
    </location>
</feature>
<feature type="active site" description="Acyl-thioester intermediate" evidence="1">
    <location>
        <position position="199"/>
    </location>
</feature>
<feature type="binding site" evidence="1">
    <location>
        <begin position="96"/>
        <end position="103"/>
    </location>
    <ligand>
        <name>substrate</name>
    </ligand>
</feature>
<feature type="binding site" evidence="1">
    <location>
        <begin position="168"/>
        <end position="170"/>
    </location>
    <ligand>
        <name>substrate</name>
    </ligand>
</feature>
<feature type="binding site" evidence="1">
    <location>
        <begin position="181"/>
        <end position="183"/>
    </location>
    <ligand>
        <name>substrate</name>
    </ligand>
</feature>
<feature type="site" description="Lowers pKa of active site Cys" evidence="1">
    <location>
        <position position="165"/>
    </location>
</feature>
<keyword id="KW-0012">Acyltransferase</keyword>
<keyword id="KW-0963">Cytoplasm</keyword>
<keyword id="KW-0808">Transferase</keyword>
<protein>
    <recommendedName>
        <fullName evidence="1">Octanoyltransferase</fullName>
        <ecNumber evidence="1">2.3.1.181</ecNumber>
    </recommendedName>
    <alternativeName>
        <fullName evidence="1">Lipoate-protein ligase B</fullName>
    </alternativeName>
    <alternativeName>
        <fullName evidence="1">Lipoyl/octanoyl transferase</fullName>
    </alternativeName>
    <alternativeName>
        <fullName evidence="1">Octanoyl-[acyl-carrier-protein]-protein N-octanoyltransferase</fullName>
    </alternativeName>
</protein>
<accession>A4JI72</accession>
<organism>
    <name type="scientific">Burkholderia vietnamiensis (strain G4 / LMG 22486)</name>
    <name type="common">Burkholderia cepacia (strain R1808)</name>
    <dbReference type="NCBI Taxonomy" id="269482"/>
    <lineage>
        <taxon>Bacteria</taxon>
        <taxon>Pseudomonadati</taxon>
        <taxon>Pseudomonadota</taxon>
        <taxon>Betaproteobacteria</taxon>
        <taxon>Burkholderiales</taxon>
        <taxon>Burkholderiaceae</taxon>
        <taxon>Burkholderia</taxon>
        <taxon>Burkholderia cepacia complex</taxon>
    </lineage>
</organism>
<gene>
    <name evidence="1" type="primary">lipB</name>
    <name type="ordered locus">Bcep1808_2984</name>
</gene>
<sequence length="251" mass="26552">MSVSPVAIVSTPVAVSASPAGSPAQHDAPLTVRWRGTEAYQTSFDAMRAFTDARTAETPDEIWIVEHPPVYTLGQAGDPAHLLVADSGVPLVKVDRGGQITYHGPGQIVAYLLLDLRRRKLMVRTLVTRIEEAVIETLAAYNLASVRKAGAPGIYVASGVHGGAKIAALGLKIRNGCSYHGLSLNVKMDLRPFLAINPCGYAGLETVDMASLEVAADWNDVARTLVGRLIANLDGASAAADKPHALEHSND</sequence>